<organism>
    <name type="scientific">Methylobacterium sp. (strain 4-46)</name>
    <dbReference type="NCBI Taxonomy" id="426117"/>
    <lineage>
        <taxon>Bacteria</taxon>
        <taxon>Pseudomonadati</taxon>
        <taxon>Pseudomonadota</taxon>
        <taxon>Alphaproteobacteria</taxon>
        <taxon>Hyphomicrobiales</taxon>
        <taxon>Methylobacteriaceae</taxon>
        <taxon>Methylobacterium</taxon>
    </lineage>
</organism>
<protein>
    <recommendedName>
        <fullName evidence="1">Large ribosomal subunit protein bL21</fullName>
    </recommendedName>
    <alternativeName>
        <fullName evidence="2">50S ribosomal protein L21</fullName>
    </alternativeName>
</protein>
<accession>B0UMS1</accession>
<name>RL21_METS4</name>
<dbReference type="EMBL" id="CP000943">
    <property type="protein sequence ID" value="ACA18559.1"/>
    <property type="molecule type" value="Genomic_DNA"/>
</dbReference>
<dbReference type="RefSeq" id="WP_012333950.1">
    <property type="nucleotide sequence ID" value="NC_010511.1"/>
</dbReference>
<dbReference type="SMR" id="B0UMS1"/>
<dbReference type="STRING" id="426117.M446_4210"/>
<dbReference type="KEGG" id="met:M446_4210"/>
<dbReference type="eggNOG" id="COG0261">
    <property type="taxonomic scope" value="Bacteria"/>
</dbReference>
<dbReference type="HOGENOM" id="CLU_061463_3_2_5"/>
<dbReference type="GO" id="GO:0005737">
    <property type="term" value="C:cytoplasm"/>
    <property type="evidence" value="ECO:0007669"/>
    <property type="project" value="UniProtKB-ARBA"/>
</dbReference>
<dbReference type="GO" id="GO:1990904">
    <property type="term" value="C:ribonucleoprotein complex"/>
    <property type="evidence" value="ECO:0007669"/>
    <property type="project" value="UniProtKB-KW"/>
</dbReference>
<dbReference type="GO" id="GO:0005840">
    <property type="term" value="C:ribosome"/>
    <property type="evidence" value="ECO:0007669"/>
    <property type="project" value="UniProtKB-KW"/>
</dbReference>
<dbReference type="GO" id="GO:0019843">
    <property type="term" value="F:rRNA binding"/>
    <property type="evidence" value="ECO:0007669"/>
    <property type="project" value="UniProtKB-UniRule"/>
</dbReference>
<dbReference type="GO" id="GO:0003735">
    <property type="term" value="F:structural constituent of ribosome"/>
    <property type="evidence" value="ECO:0007669"/>
    <property type="project" value="InterPro"/>
</dbReference>
<dbReference type="GO" id="GO:0006412">
    <property type="term" value="P:translation"/>
    <property type="evidence" value="ECO:0007669"/>
    <property type="project" value="UniProtKB-UniRule"/>
</dbReference>
<dbReference type="HAMAP" id="MF_01363">
    <property type="entry name" value="Ribosomal_bL21"/>
    <property type="match status" value="1"/>
</dbReference>
<dbReference type="InterPro" id="IPR028909">
    <property type="entry name" value="bL21-like"/>
</dbReference>
<dbReference type="InterPro" id="IPR036164">
    <property type="entry name" value="bL21-like_sf"/>
</dbReference>
<dbReference type="InterPro" id="IPR001787">
    <property type="entry name" value="Ribosomal_bL21"/>
</dbReference>
<dbReference type="NCBIfam" id="TIGR00061">
    <property type="entry name" value="L21"/>
    <property type="match status" value="1"/>
</dbReference>
<dbReference type="PANTHER" id="PTHR21349">
    <property type="entry name" value="50S RIBOSOMAL PROTEIN L21"/>
    <property type="match status" value="1"/>
</dbReference>
<dbReference type="PANTHER" id="PTHR21349:SF0">
    <property type="entry name" value="LARGE RIBOSOMAL SUBUNIT PROTEIN BL21M"/>
    <property type="match status" value="1"/>
</dbReference>
<dbReference type="Pfam" id="PF00829">
    <property type="entry name" value="Ribosomal_L21p"/>
    <property type="match status" value="1"/>
</dbReference>
<dbReference type="SUPFAM" id="SSF141091">
    <property type="entry name" value="L21p-like"/>
    <property type="match status" value="1"/>
</dbReference>
<comment type="function">
    <text evidence="1">This protein binds to 23S rRNA in the presence of protein L20.</text>
</comment>
<comment type="subunit">
    <text evidence="1">Part of the 50S ribosomal subunit. Contacts protein L20.</text>
</comment>
<comment type="similarity">
    <text evidence="1">Belongs to the bacterial ribosomal protein bL21 family.</text>
</comment>
<sequence>MFAVIKTGGKQYRVAANDVITIGKLEGDAGTAVTFGEVLLYADGDGATKVGAPTVAGVSVAGEIVAQTRGPKVIAFKKRRRQNSRRKRGHRQDFTVVRVTGISAA</sequence>
<reference key="1">
    <citation type="submission" date="2008-02" db="EMBL/GenBank/DDBJ databases">
        <title>Complete sequence of chromosome of Methylobacterium sp. 4-46.</title>
        <authorList>
            <consortium name="US DOE Joint Genome Institute"/>
            <person name="Copeland A."/>
            <person name="Lucas S."/>
            <person name="Lapidus A."/>
            <person name="Glavina del Rio T."/>
            <person name="Dalin E."/>
            <person name="Tice H."/>
            <person name="Bruce D."/>
            <person name="Goodwin L."/>
            <person name="Pitluck S."/>
            <person name="Chertkov O."/>
            <person name="Brettin T."/>
            <person name="Detter J.C."/>
            <person name="Han C."/>
            <person name="Kuske C.R."/>
            <person name="Schmutz J."/>
            <person name="Larimer F."/>
            <person name="Land M."/>
            <person name="Hauser L."/>
            <person name="Kyrpides N."/>
            <person name="Ivanova N."/>
            <person name="Marx C.J."/>
            <person name="Richardson P."/>
        </authorList>
    </citation>
    <scope>NUCLEOTIDE SEQUENCE [LARGE SCALE GENOMIC DNA]</scope>
    <source>
        <strain>4-46</strain>
    </source>
</reference>
<gene>
    <name evidence="1" type="primary">rplU</name>
    <name type="ordered locus">M446_4210</name>
</gene>
<proteinExistence type="inferred from homology"/>
<feature type="chain" id="PRO_1000143821" description="Large ribosomal subunit protein bL21">
    <location>
        <begin position="1"/>
        <end position="105"/>
    </location>
</feature>
<keyword id="KW-0687">Ribonucleoprotein</keyword>
<keyword id="KW-0689">Ribosomal protein</keyword>
<keyword id="KW-0694">RNA-binding</keyword>
<keyword id="KW-0699">rRNA-binding</keyword>
<evidence type="ECO:0000255" key="1">
    <source>
        <dbReference type="HAMAP-Rule" id="MF_01363"/>
    </source>
</evidence>
<evidence type="ECO:0000305" key="2"/>